<evidence type="ECO:0000255" key="1"/>
<evidence type="ECO:0000269" key="2">
    <source>
    </source>
</evidence>
<evidence type="ECO:0000269" key="3">
    <source>
    </source>
</evidence>
<evidence type="ECO:0000269" key="4">
    <source>
    </source>
</evidence>
<evidence type="ECO:0000303" key="5">
    <source>
    </source>
</evidence>
<evidence type="ECO:0000305" key="6"/>
<evidence type="ECO:0000312" key="7">
    <source>
        <dbReference type="Araport" id="AT5G12290"/>
    </source>
</evidence>
<evidence type="ECO:0000312" key="8">
    <source>
        <dbReference type="EMBL" id="CAC42890.1"/>
    </source>
</evidence>
<gene>
    <name evidence="5" type="primary">DGS1</name>
    <name evidence="7" type="ordered locus">At5g12290</name>
    <name evidence="8" type="ORF">T2L20</name>
</gene>
<keyword id="KW-0472">Membrane</keyword>
<keyword id="KW-0496">Mitochondrion</keyword>
<keyword id="KW-1000">Mitochondrion outer membrane</keyword>
<keyword id="KW-1185">Reference proteome</keyword>
<keyword id="KW-0809">Transit peptide</keyword>
<keyword id="KW-0812">Transmembrane</keyword>
<keyword id="KW-1133">Transmembrane helix</keyword>
<proteinExistence type="evidence at protein level"/>
<comment type="function">
    <text evidence="2 3 4">Involved in galactoglycerolipid biosynthesis (PubMed:18208519). Contributes to an intracellular signal that regulates an alternative DGD1-independent galactoglycerolipid biosynthesis pathway in chloroplasts (PubMed:18208519, PubMed:20181751). Being involved in mitochondrial lipid homeostasis, modulates mitochondrion biogenesis and physiology, as well as stress responses (PubMed:31118221).</text>
</comment>
<comment type="subunit">
    <text evidence="3 4">Component of a mitochondrial large protein complex that contains, at least, MIC60, DGS1, TOM40 (e.g. TOM40-1), TOM20 proteins (e.g. TOM20-2), and petC/RISP.</text>
</comment>
<comment type="subcellular location">
    <subcellularLocation>
        <location evidence="2 4">Mitochondrion outer membrane</location>
        <topology evidence="1">Multi-pass membrane protein</topology>
    </subcellularLocation>
</comment>
<comment type="disruption phenotype">
    <text evidence="3 4">No effect on plant growth, AOX levels, mitochondrial protein content, and lipid composition.</text>
</comment>
<comment type="sequence caution" evidence="6">
    <conflict type="erroneous gene model prediction">
        <sequence resource="EMBL-CDS" id="CAC42890"/>
    </conflict>
</comment>
<dbReference type="EMBL" id="AL592312">
    <property type="protein sequence ID" value="CAC42890.1"/>
    <property type="status" value="ALT_SEQ"/>
    <property type="molecule type" value="Genomic_DNA"/>
</dbReference>
<dbReference type="EMBL" id="CP002688">
    <property type="protein sequence ID" value="AED91788.1"/>
    <property type="molecule type" value="Genomic_DNA"/>
</dbReference>
<dbReference type="EMBL" id="CP002688">
    <property type="protein sequence ID" value="ANM68882.1"/>
    <property type="molecule type" value="Genomic_DNA"/>
</dbReference>
<dbReference type="EMBL" id="AK118777">
    <property type="protein sequence ID" value="BAC43370.1"/>
    <property type="molecule type" value="mRNA"/>
</dbReference>
<dbReference type="EMBL" id="BT002450">
    <property type="protein sequence ID" value="AAO00810.1"/>
    <property type="molecule type" value="mRNA"/>
</dbReference>
<dbReference type="EMBL" id="BT008365">
    <property type="protein sequence ID" value="AAP37724.1"/>
    <property type="molecule type" value="mRNA"/>
</dbReference>
<dbReference type="RefSeq" id="NP_001330600.1">
    <property type="nucleotide sequence ID" value="NM_001343234.1"/>
</dbReference>
<dbReference type="RefSeq" id="NP_568262.2">
    <property type="nucleotide sequence ID" value="NM_121267.5"/>
</dbReference>
<dbReference type="FunCoup" id="Q8GUK1">
    <property type="interactions" value="1080"/>
</dbReference>
<dbReference type="STRING" id="3702.Q8GUK1"/>
<dbReference type="GlyGen" id="Q8GUK1">
    <property type="glycosylation" value="1 site"/>
</dbReference>
<dbReference type="iPTMnet" id="Q8GUK1"/>
<dbReference type="PaxDb" id="3702-AT5G12290.1"/>
<dbReference type="ProteomicsDB" id="224039"/>
<dbReference type="EnsemblPlants" id="AT5G12290.1">
    <property type="protein sequence ID" value="AT5G12290.1"/>
    <property type="gene ID" value="AT5G12290"/>
</dbReference>
<dbReference type="EnsemblPlants" id="AT5G12290.4">
    <property type="protein sequence ID" value="AT5G12290.4"/>
    <property type="gene ID" value="AT5G12290"/>
</dbReference>
<dbReference type="GeneID" id="831104"/>
<dbReference type="Gramene" id="AT5G12290.1">
    <property type="protein sequence ID" value="AT5G12290.1"/>
    <property type="gene ID" value="AT5G12290"/>
</dbReference>
<dbReference type="Gramene" id="AT5G12290.4">
    <property type="protein sequence ID" value="AT5G12290.4"/>
    <property type="gene ID" value="AT5G12290"/>
</dbReference>
<dbReference type="KEGG" id="ath:AT5G12290"/>
<dbReference type="Araport" id="AT5G12290"/>
<dbReference type="TAIR" id="AT5G12290">
    <property type="gene designation" value="DGS1"/>
</dbReference>
<dbReference type="eggNOG" id="ENOG502QTT6">
    <property type="taxonomic scope" value="Eukaryota"/>
</dbReference>
<dbReference type="HOGENOM" id="CLU_035193_0_0_1"/>
<dbReference type="InParanoid" id="Q8GUK1"/>
<dbReference type="OMA" id="EIVMMRY"/>
<dbReference type="OrthoDB" id="413313at2759"/>
<dbReference type="PhylomeDB" id="Q8GUK1"/>
<dbReference type="PRO" id="PR:Q8GUK1"/>
<dbReference type="Proteomes" id="UP000006548">
    <property type="component" value="Chromosome 5"/>
</dbReference>
<dbReference type="ExpressionAtlas" id="Q8GUK1">
    <property type="expression patterns" value="baseline and differential"/>
</dbReference>
<dbReference type="GO" id="GO:0005741">
    <property type="term" value="C:mitochondrial outer membrane"/>
    <property type="evidence" value="ECO:0000314"/>
    <property type="project" value="UniProtKB"/>
</dbReference>
<dbReference type="GO" id="GO:0005739">
    <property type="term" value="C:mitochondrion"/>
    <property type="evidence" value="ECO:0007005"/>
    <property type="project" value="TAIR"/>
</dbReference>
<dbReference type="GO" id="GO:0032991">
    <property type="term" value="C:protein-containing complex"/>
    <property type="evidence" value="ECO:0000314"/>
    <property type="project" value="TAIR"/>
</dbReference>
<dbReference type="GO" id="GO:0019375">
    <property type="term" value="P:galactolipid biosynthetic process"/>
    <property type="evidence" value="ECO:0000315"/>
    <property type="project" value="TAIR"/>
</dbReference>
<dbReference type="GO" id="GO:0050665">
    <property type="term" value="P:hydrogen peroxide biosynthetic process"/>
    <property type="evidence" value="ECO:0000315"/>
    <property type="project" value="TAIR"/>
</dbReference>
<dbReference type="GO" id="GO:0007005">
    <property type="term" value="P:mitochondrion organization"/>
    <property type="evidence" value="ECO:0000315"/>
    <property type="project" value="UniProtKB"/>
</dbReference>
<dbReference type="GO" id="GO:0009414">
    <property type="term" value="P:response to water deprivation"/>
    <property type="evidence" value="ECO:0000315"/>
    <property type="project" value="UniProtKB"/>
</dbReference>
<dbReference type="InterPro" id="IPR013946">
    <property type="entry name" value="NCA2"/>
</dbReference>
<dbReference type="PANTHER" id="PTHR28234">
    <property type="entry name" value="NUCLEAR CONTROL OF ATPASE PROTEIN 2"/>
    <property type="match status" value="1"/>
</dbReference>
<dbReference type="PANTHER" id="PTHR28234:SF1">
    <property type="entry name" value="NUCLEAR CONTROL OF ATPASE PROTEIN 2"/>
    <property type="match status" value="1"/>
</dbReference>
<dbReference type="Pfam" id="PF08637">
    <property type="entry name" value="NCA2"/>
    <property type="match status" value="1"/>
</dbReference>
<dbReference type="PROSITE" id="PS00027">
    <property type="entry name" value="HOMEOBOX_1"/>
    <property type="match status" value="1"/>
</dbReference>
<feature type="transit peptide" description="Mitochondrion" evidence="1">
    <location>
        <begin position="1"/>
        <end status="unknown"/>
    </location>
</feature>
<feature type="chain" id="PRO_0000435794" description="Protein DGS1, mitochondrial">
    <location>
        <begin status="unknown"/>
        <end position="602"/>
    </location>
</feature>
<feature type="transmembrane region" description="Helical" evidence="1">
    <location>
        <begin position="300"/>
        <end position="320"/>
    </location>
</feature>
<feature type="transmembrane region" description="Helical" evidence="1">
    <location>
        <begin position="465"/>
        <end position="485"/>
    </location>
</feature>
<feature type="mutagenesis site" description="In dgs1-1; gain-of-function leading to a partial restoration of chloroplast galactoglycerolipid deficiency in plants disrupted for DGD1, associated with the accumulation of hydrogen peroxide H(2)O(2) that triggers the activation of an alternative, DGD1-independent galactoglycerolipid biosynthesis pathway in chloroplasts, due to an impaired accumulation of AOX. Altered stability and protease accessibility of the mitochondrial complex to which it localizes. Impaired mitochondrial biogenesis, mitochondrial size, lipid content and composition, protein import and abundance, and respiratory capacity. Higher tolerance to drought stress, but early senescence phenotype. Reduced expression of DGS1, MIC60, TOM40 and TOM20-2 proteins but accumulation of petC/RISP. Ectopic localization at the endoplasmic reticulum in addition to mitochondrion." evidence="3 4">
    <original>D</original>
    <variation>N</variation>
    <location>
        <position position="457"/>
    </location>
</feature>
<feature type="mutagenesis site" description="In dgs1; partially restores digalactoglycerolipid content in the dgd1 mutant." evidence="2">
    <original>D</original>
    <variation>N</variation>
    <location>
        <position position="457"/>
    </location>
</feature>
<feature type="sequence conflict" description="In Ref. 3; BAC43370." evidence="6" ref="3">
    <original>D</original>
    <variation>G</variation>
    <location>
        <position position="154"/>
    </location>
</feature>
<protein>
    <recommendedName>
        <fullName evidence="6">Protein DGS1, mitochondrial</fullName>
    </recommendedName>
    <alternativeName>
        <fullName evidence="5">Protein DGD1 SUPPRESSOR 1</fullName>
    </alternativeName>
</protein>
<sequence>MDSQPPVNESTPSTALSNFGELVPFYSSYLWNRLASLLPTSKPIFLGKISNLYRQTVSRKRSISFPLPLPSDFPSSSTITSNVSADTARIHGVLEEIMADVLSNLHDIQKSLDFWRSRAEGSNARKAYFMIFERGPTAFVNESTKFVSKSLSEDSAMQHLCQSSSSHMTERMRVLVELRSALASFIAQLYVELDKRGEDLVKIPEKALPSLLAVINGLFSNLEGSFSHLHAVRECDSSVDGSYPMPLVFDRLPEVNEEGSQWTDCELTDAINLVHKNLEKLNSYLSVMVGKHRKPRRMTLYWVRYTCGAVGLSVFSIWLLRHSSLMGSSDIENWVHDAKEATMSFFSDHVEQPLLSIRDELFDTFRKRHKGVMETEEVQLTQDSLHRMLRNFCEQATREKVPDNASDQEMLEVVMNRYEKELVHPIHNLLSGELARGLLIQVQKLKLDIETAMLELDQILRANEINFAILAALPAFFLSIVMLTVLRTWLKKDSKAQGRGRIARIHRRLLVVEIEKRIMQYQSYIEQGRDKDAETVFGLLIYSLERLYRVVEKPARATDEWDLVKQDLIELGRPQQQTSYKLTVTQRLVTVYDCLLPTLKRQ</sequence>
<reference key="1">
    <citation type="journal article" date="2000" name="Nature">
        <title>Sequence and analysis of chromosome 5 of the plant Arabidopsis thaliana.</title>
        <authorList>
            <person name="Tabata S."/>
            <person name="Kaneko T."/>
            <person name="Nakamura Y."/>
            <person name="Kotani H."/>
            <person name="Kato T."/>
            <person name="Asamizu E."/>
            <person name="Miyajima N."/>
            <person name="Sasamoto S."/>
            <person name="Kimura T."/>
            <person name="Hosouchi T."/>
            <person name="Kawashima K."/>
            <person name="Kohara M."/>
            <person name="Matsumoto M."/>
            <person name="Matsuno A."/>
            <person name="Muraki A."/>
            <person name="Nakayama S."/>
            <person name="Nakazaki N."/>
            <person name="Naruo K."/>
            <person name="Okumura S."/>
            <person name="Shinpo S."/>
            <person name="Takeuchi C."/>
            <person name="Wada T."/>
            <person name="Watanabe A."/>
            <person name="Yamada M."/>
            <person name="Yasuda M."/>
            <person name="Sato S."/>
            <person name="de la Bastide M."/>
            <person name="Huang E."/>
            <person name="Spiegel L."/>
            <person name="Gnoj L."/>
            <person name="O'Shaughnessy A."/>
            <person name="Preston R."/>
            <person name="Habermann K."/>
            <person name="Murray J."/>
            <person name="Johnson D."/>
            <person name="Rohlfing T."/>
            <person name="Nelson J."/>
            <person name="Stoneking T."/>
            <person name="Pepin K."/>
            <person name="Spieth J."/>
            <person name="Sekhon M."/>
            <person name="Armstrong J."/>
            <person name="Becker M."/>
            <person name="Belter E."/>
            <person name="Cordum H."/>
            <person name="Cordes M."/>
            <person name="Courtney L."/>
            <person name="Courtney W."/>
            <person name="Dante M."/>
            <person name="Du H."/>
            <person name="Edwards J."/>
            <person name="Fryman J."/>
            <person name="Haakensen B."/>
            <person name="Lamar E."/>
            <person name="Latreille P."/>
            <person name="Leonard S."/>
            <person name="Meyer R."/>
            <person name="Mulvaney E."/>
            <person name="Ozersky P."/>
            <person name="Riley A."/>
            <person name="Strowmatt C."/>
            <person name="Wagner-McPherson C."/>
            <person name="Wollam A."/>
            <person name="Yoakum M."/>
            <person name="Bell M."/>
            <person name="Dedhia N."/>
            <person name="Parnell L."/>
            <person name="Shah R."/>
            <person name="Rodriguez M."/>
            <person name="Hoon See L."/>
            <person name="Vil D."/>
            <person name="Baker J."/>
            <person name="Kirchoff K."/>
            <person name="Toth K."/>
            <person name="King L."/>
            <person name="Bahret A."/>
            <person name="Miller B."/>
            <person name="Marra M.A."/>
            <person name="Martienssen R."/>
            <person name="McCombie W.R."/>
            <person name="Wilson R.K."/>
            <person name="Murphy G."/>
            <person name="Bancroft I."/>
            <person name="Volckaert G."/>
            <person name="Wambutt R."/>
            <person name="Duesterhoeft A."/>
            <person name="Stiekema W."/>
            <person name="Pohl T."/>
            <person name="Entian K.-D."/>
            <person name="Terryn N."/>
            <person name="Hartley N."/>
            <person name="Bent E."/>
            <person name="Johnson S."/>
            <person name="Langham S.-A."/>
            <person name="McCullagh B."/>
            <person name="Robben J."/>
            <person name="Grymonprez B."/>
            <person name="Zimmermann W."/>
            <person name="Ramsperger U."/>
            <person name="Wedler H."/>
            <person name="Balke K."/>
            <person name="Wedler E."/>
            <person name="Peters S."/>
            <person name="van Staveren M."/>
            <person name="Dirkse W."/>
            <person name="Mooijman P."/>
            <person name="Klein Lankhorst R."/>
            <person name="Weitzenegger T."/>
            <person name="Bothe G."/>
            <person name="Rose M."/>
            <person name="Hauf J."/>
            <person name="Berneiser S."/>
            <person name="Hempel S."/>
            <person name="Feldpausch M."/>
            <person name="Lamberth S."/>
            <person name="Villarroel R."/>
            <person name="Gielen J."/>
            <person name="Ardiles W."/>
            <person name="Bents O."/>
            <person name="Lemcke K."/>
            <person name="Kolesov G."/>
            <person name="Mayer K.F.X."/>
            <person name="Rudd S."/>
            <person name="Schoof H."/>
            <person name="Schueller C."/>
            <person name="Zaccaria P."/>
            <person name="Mewes H.-W."/>
            <person name="Bevan M."/>
            <person name="Fransz P.F."/>
        </authorList>
    </citation>
    <scope>NUCLEOTIDE SEQUENCE [LARGE SCALE GENOMIC DNA]</scope>
    <source>
        <strain>cv. Columbia</strain>
    </source>
</reference>
<reference key="2">
    <citation type="journal article" date="2017" name="Plant J.">
        <title>Araport11: a complete reannotation of the Arabidopsis thaliana reference genome.</title>
        <authorList>
            <person name="Cheng C.Y."/>
            <person name="Krishnakumar V."/>
            <person name="Chan A.P."/>
            <person name="Thibaud-Nissen F."/>
            <person name="Schobel S."/>
            <person name="Town C.D."/>
        </authorList>
    </citation>
    <scope>GENOME REANNOTATION</scope>
    <source>
        <strain>cv. Columbia</strain>
    </source>
</reference>
<reference key="3">
    <citation type="journal article" date="2002" name="Science">
        <title>Functional annotation of a full-length Arabidopsis cDNA collection.</title>
        <authorList>
            <person name="Seki M."/>
            <person name="Narusaka M."/>
            <person name="Kamiya A."/>
            <person name="Ishida J."/>
            <person name="Satou M."/>
            <person name="Sakurai T."/>
            <person name="Nakajima M."/>
            <person name="Enju A."/>
            <person name="Akiyama K."/>
            <person name="Oono Y."/>
            <person name="Muramatsu M."/>
            <person name="Hayashizaki Y."/>
            <person name="Kawai J."/>
            <person name="Carninci P."/>
            <person name="Itoh M."/>
            <person name="Ishii Y."/>
            <person name="Arakawa T."/>
            <person name="Shibata K."/>
            <person name="Shinagawa A."/>
            <person name="Shinozaki K."/>
        </authorList>
    </citation>
    <scope>NUCLEOTIDE SEQUENCE [LARGE SCALE MRNA]</scope>
    <source>
        <strain>cv. Columbia</strain>
    </source>
</reference>
<reference key="4">
    <citation type="journal article" date="2003" name="Science">
        <title>Empirical analysis of transcriptional activity in the Arabidopsis genome.</title>
        <authorList>
            <person name="Yamada K."/>
            <person name="Lim J."/>
            <person name="Dale J.M."/>
            <person name="Chen H."/>
            <person name="Shinn P."/>
            <person name="Palm C.J."/>
            <person name="Southwick A.M."/>
            <person name="Wu H.C."/>
            <person name="Kim C.J."/>
            <person name="Nguyen M."/>
            <person name="Pham P.K."/>
            <person name="Cheuk R.F."/>
            <person name="Karlin-Newmann G."/>
            <person name="Liu S.X."/>
            <person name="Lam B."/>
            <person name="Sakano H."/>
            <person name="Wu T."/>
            <person name="Yu G."/>
            <person name="Miranda M."/>
            <person name="Quach H.L."/>
            <person name="Tripp M."/>
            <person name="Chang C.H."/>
            <person name="Lee J.M."/>
            <person name="Toriumi M.J."/>
            <person name="Chan M.M."/>
            <person name="Tang C.C."/>
            <person name="Onodera C.S."/>
            <person name="Deng J.M."/>
            <person name="Akiyama K."/>
            <person name="Ansari Y."/>
            <person name="Arakawa T."/>
            <person name="Banh J."/>
            <person name="Banno F."/>
            <person name="Bowser L."/>
            <person name="Brooks S.Y."/>
            <person name="Carninci P."/>
            <person name="Chao Q."/>
            <person name="Choy N."/>
            <person name="Enju A."/>
            <person name="Goldsmith A.D."/>
            <person name="Gurjal M."/>
            <person name="Hansen N.F."/>
            <person name="Hayashizaki Y."/>
            <person name="Johnson-Hopson C."/>
            <person name="Hsuan V.W."/>
            <person name="Iida K."/>
            <person name="Karnes M."/>
            <person name="Khan S."/>
            <person name="Koesema E."/>
            <person name="Ishida J."/>
            <person name="Jiang P.X."/>
            <person name="Jones T."/>
            <person name="Kawai J."/>
            <person name="Kamiya A."/>
            <person name="Meyers C."/>
            <person name="Nakajima M."/>
            <person name="Narusaka M."/>
            <person name="Seki M."/>
            <person name="Sakurai T."/>
            <person name="Satou M."/>
            <person name="Tamse R."/>
            <person name="Vaysberg M."/>
            <person name="Wallender E.K."/>
            <person name="Wong C."/>
            <person name="Yamamura Y."/>
            <person name="Yuan S."/>
            <person name="Shinozaki K."/>
            <person name="Davis R.W."/>
            <person name="Theologis A."/>
            <person name="Ecker J.R."/>
        </authorList>
    </citation>
    <scope>NUCLEOTIDE SEQUENCE [LARGE SCALE MRNA]</scope>
    <source>
        <strain>cv. Columbia</strain>
    </source>
</reference>
<reference key="5">
    <citation type="journal article" date="2008" name="Plant J.">
        <title>Mutation of a mitochondrial outer membrane protein affects chloroplast lipid biosynthesis.</title>
        <authorList>
            <person name="Xu C."/>
            <person name="Moellering E.R."/>
            <person name="Fan J."/>
            <person name="Benning C."/>
        </authorList>
    </citation>
    <scope>FUNCTION</scope>
    <scope>SUBCELLULAR LOCATION</scope>
    <scope>MUTAGENESIS OF ASP-457</scope>
</reference>
<reference key="6">
    <citation type="journal article" date="2010" name="Plant Physiol.">
        <title>Phosphate regulation of lipid biosynthesis in Arabidopsis is independent of the mitochondrial outer membrane DGS1 complex.</title>
        <authorList>
            <person name="Moellering E.R."/>
            <person name="Benning C."/>
        </authorList>
    </citation>
    <scope>FUNCTION</scope>
    <scope>MUTAGENESIS OF ASP-457</scope>
    <scope>DISRUPTION PHENOTYPE</scope>
    <scope>SUBUNIT</scope>
    <source>
        <strain>cv. Col-2</strain>
    </source>
</reference>
<reference key="7">
    <citation type="journal article" date="2019" name="Plant Cell">
        <title>Arabidopsis DGD1 SUPPRESSOR1 is a subunit of the mitochondrial contact site and cristae organizing system and affects mitochondrial biogenesis.</title>
        <authorList>
            <person name="Li L."/>
            <person name="Lavell A."/>
            <person name="Meng X."/>
            <person name="Berkowitz O."/>
            <person name="Selinski J."/>
            <person name="van de Meene A."/>
            <person name="Carrie C."/>
            <person name="Benning C."/>
            <person name="Whelan J."/>
            <person name="De Clercq I."/>
            <person name="Wang Y."/>
        </authorList>
    </citation>
    <scope>FUNCTION</scope>
    <scope>MUTAGENESIS OF ASP-457</scope>
    <scope>DISRUPTION PHENOTYPE</scope>
    <scope>SUBUNIT</scope>
    <scope>SUBCELLULAR LOCATION</scope>
    <source>
        <strain>cv. Columbia</strain>
    </source>
</reference>
<accession>Q8GUK1</accession>
<accession>Q8GWL0</accession>
<accession>Q94CL3</accession>
<name>DGS1_ARATH</name>
<organism>
    <name type="scientific">Arabidopsis thaliana</name>
    <name type="common">Mouse-ear cress</name>
    <dbReference type="NCBI Taxonomy" id="3702"/>
    <lineage>
        <taxon>Eukaryota</taxon>
        <taxon>Viridiplantae</taxon>
        <taxon>Streptophyta</taxon>
        <taxon>Embryophyta</taxon>
        <taxon>Tracheophyta</taxon>
        <taxon>Spermatophyta</taxon>
        <taxon>Magnoliopsida</taxon>
        <taxon>eudicotyledons</taxon>
        <taxon>Gunneridae</taxon>
        <taxon>Pentapetalae</taxon>
        <taxon>rosids</taxon>
        <taxon>malvids</taxon>
        <taxon>Brassicales</taxon>
        <taxon>Brassicaceae</taxon>
        <taxon>Camelineae</taxon>
        <taxon>Arabidopsis</taxon>
    </lineage>
</organism>